<organism>
    <name type="scientific">Cronobacter turicensis (strain DSM 18703 / CCUG 55852 / LMG 23827 / z3032)</name>
    <dbReference type="NCBI Taxonomy" id="693216"/>
    <lineage>
        <taxon>Bacteria</taxon>
        <taxon>Pseudomonadati</taxon>
        <taxon>Pseudomonadota</taxon>
        <taxon>Gammaproteobacteria</taxon>
        <taxon>Enterobacterales</taxon>
        <taxon>Enterobacteriaceae</taxon>
        <taxon>Cronobacter</taxon>
    </lineage>
</organism>
<accession>C9XTA5</accession>
<sequence>MFDIGLNITSSQFDHDRDEMIARARAAGVDSMLFTGTSLEESDRACAFARRYAGCWSTAGVHPHDASTWNDESAARLRALASEPEVVAIGECGLDFNRNFSTPAEQEHAFTEQLRLAAALALPVFLHCRDAHARFLALLDPWLDKLPGAVLHCFTGTEQEARECLARGMYLGITGWVCDERRGLELRALLPIIPADRLLLETDAPYLLPRDLTPKPASRRNEPCWLPHILTQVAQWRGEDPAWLEAATDANAARLFLKNASPA</sequence>
<gene>
    <name evidence="1" type="primary">tatD</name>
    <name type="ordered locus">Ctu_02700</name>
</gene>
<dbReference type="EC" id="3.1.11.-" evidence="1"/>
<dbReference type="EC" id="3.1.13.-" evidence="1"/>
<dbReference type="EMBL" id="FN543093">
    <property type="protein sequence ID" value="CBA27123.1"/>
    <property type="status" value="ALT_INIT"/>
    <property type="molecule type" value="Genomic_DNA"/>
</dbReference>
<dbReference type="SMR" id="C9XTA5"/>
<dbReference type="KEGG" id="ctu:CTU_02700"/>
<dbReference type="PATRIC" id="fig|693216.3.peg.259"/>
<dbReference type="HOGENOM" id="CLU_031506_1_2_6"/>
<dbReference type="Proteomes" id="UP000002069">
    <property type="component" value="Chromosome"/>
</dbReference>
<dbReference type="GO" id="GO:0005737">
    <property type="term" value="C:cytoplasm"/>
    <property type="evidence" value="ECO:0007669"/>
    <property type="project" value="UniProtKB-SubCell"/>
</dbReference>
<dbReference type="GO" id="GO:0000175">
    <property type="term" value="F:3'-5'-RNA exonuclease activity"/>
    <property type="evidence" value="ECO:0007669"/>
    <property type="project" value="UniProtKB-UniRule"/>
</dbReference>
<dbReference type="GO" id="GO:0000287">
    <property type="term" value="F:magnesium ion binding"/>
    <property type="evidence" value="ECO:0007669"/>
    <property type="project" value="UniProtKB-UniRule"/>
</dbReference>
<dbReference type="GO" id="GO:0008310">
    <property type="term" value="F:single-stranded DNA 3'-5' DNA exonuclease activity"/>
    <property type="evidence" value="ECO:0007669"/>
    <property type="project" value="UniProtKB-UniRule"/>
</dbReference>
<dbReference type="CDD" id="cd01310">
    <property type="entry name" value="TatD_DNAse"/>
    <property type="match status" value="1"/>
</dbReference>
<dbReference type="FunFam" id="3.20.20.140:FF:000018">
    <property type="entry name" value="3'-5' ssDNA/RNA exonuclease TatD"/>
    <property type="match status" value="1"/>
</dbReference>
<dbReference type="Gene3D" id="3.20.20.140">
    <property type="entry name" value="Metal-dependent hydrolases"/>
    <property type="match status" value="1"/>
</dbReference>
<dbReference type="HAMAP" id="MF_00901">
    <property type="entry name" value="TatD_exonuclease"/>
    <property type="match status" value="1"/>
</dbReference>
<dbReference type="InterPro" id="IPR018228">
    <property type="entry name" value="DNase_TatD-rel_CS"/>
</dbReference>
<dbReference type="InterPro" id="IPR024918">
    <property type="entry name" value="Exonuc_TatD"/>
</dbReference>
<dbReference type="InterPro" id="IPR032466">
    <property type="entry name" value="Metal_Hydrolase"/>
</dbReference>
<dbReference type="InterPro" id="IPR001130">
    <property type="entry name" value="TatD-like"/>
</dbReference>
<dbReference type="InterPro" id="IPR050891">
    <property type="entry name" value="TatD-type_Hydrolase"/>
</dbReference>
<dbReference type="NCBIfam" id="NF007745">
    <property type="entry name" value="PRK10425.1"/>
    <property type="match status" value="1"/>
</dbReference>
<dbReference type="PANTHER" id="PTHR10060:SF15">
    <property type="entry name" value="DEOXYRIBONUCLEASE TATDN1"/>
    <property type="match status" value="1"/>
</dbReference>
<dbReference type="PANTHER" id="PTHR10060">
    <property type="entry name" value="TATD FAMILY DEOXYRIBONUCLEASE"/>
    <property type="match status" value="1"/>
</dbReference>
<dbReference type="Pfam" id="PF01026">
    <property type="entry name" value="TatD_DNase"/>
    <property type="match status" value="1"/>
</dbReference>
<dbReference type="PIRSF" id="PIRSF005902">
    <property type="entry name" value="DNase_TatD"/>
    <property type="match status" value="1"/>
</dbReference>
<dbReference type="SUPFAM" id="SSF51556">
    <property type="entry name" value="Metallo-dependent hydrolases"/>
    <property type="match status" value="1"/>
</dbReference>
<dbReference type="PROSITE" id="PS01091">
    <property type="entry name" value="TATD_3"/>
    <property type="match status" value="1"/>
</dbReference>
<reference key="1">
    <citation type="journal article" date="2011" name="J. Bacteriol.">
        <title>Complete genome sequence of Cronobacter turicensis LMG 23827, a food-borne pathogen causing deaths in neonates.</title>
        <authorList>
            <person name="Stephan R."/>
            <person name="Lehner A."/>
            <person name="Tischler P."/>
            <person name="Rattei T."/>
        </authorList>
    </citation>
    <scope>NUCLEOTIDE SEQUENCE [LARGE SCALE GENOMIC DNA]</scope>
    <source>
        <strain>DSM 18703 / CCUG 55852 / LMG 23827 / z3032</strain>
    </source>
</reference>
<proteinExistence type="inferred from homology"/>
<comment type="function">
    <text evidence="1">3'-5' exonuclease that prefers single-stranded DNA and RNA. May play a role in the H(2)O(2)-induced DNA damage repair.</text>
</comment>
<comment type="cofactor">
    <cofactor evidence="1">
        <name>Mg(2+)</name>
        <dbReference type="ChEBI" id="CHEBI:18420"/>
    </cofactor>
</comment>
<comment type="subunit">
    <text evidence="1">Monomer.</text>
</comment>
<comment type="subcellular location">
    <subcellularLocation>
        <location evidence="1">Cytoplasm</location>
    </subcellularLocation>
</comment>
<comment type="similarity">
    <text evidence="1">Belongs to the metallo-dependent hydrolases superfamily. TatD-type hydrolase family. TatD subfamily.</text>
</comment>
<comment type="sequence caution" evidence="2">
    <conflict type="erroneous initiation">
        <sequence resource="EMBL-CDS" id="CBA27123"/>
    </conflict>
    <text>Extended N-terminus.</text>
</comment>
<protein>
    <recommendedName>
        <fullName evidence="1">3'-5' ssDNA/RNA exonuclease TatD</fullName>
        <ecNumber evidence="1">3.1.11.-</ecNumber>
        <ecNumber evidence="1">3.1.13.-</ecNumber>
    </recommendedName>
    <alternativeName>
        <fullName evidence="1">DNase TatD</fullName>
    </alternativeName>
</protein>
<name>TATD_CROTZ</name>
<evidence type="ECO:0000255" key="1">
    <source>
        <dbReference type="HAMAP-Rule" id="MF_00901"/>
    </source>
</evidence>
<evidence type="ECO:0000305" key="2"/>
<feature type="chain" id="PRO_0000412732" description="3'-5' ssDNA/RNA exonuclease TatD">
    <location>
        <begin position="1"/>
        <end position="263"/>
    </location>
</feature>
<feature type="binding site" evidence="1">
    <location>
        <position position="91"/>
    </location>
    <ligand>
        <name>a divalent metal cation</name>
        <dbReference type="ChEBI" id="CHEBI:60240"/>
    </ligand>
</feature>
<feature type="binding site" evidence="1">
    <location>
        <position position="127"/>
    </location>
    <ligand>
        <name>a divalent metal cation</name>
        <dbReference type="ChEBI" id="CHEBI:60240"/>
    </ligand>
</feature>
<feature type="binding site" evidence="1">
    <location>
        <position position="152"/>
    </location>
    <ligand>
        <name>a divalent metal cation</name>
        <dbReference type="ChEBI" id="CHEBI:60240"/>
    </ligand>
</feature>
<keyword id="KW-0963">Cytoplasm</keyword>
<keyword id="KW-0269">Exonuclease</keyword>
<keyword id="KW-0378">Hydrolase</keyword>
<keyword id="KW-0460">Magnesium</keyword>
<keyword id="KW-0479">Metal-binding</keyword>
<keyword id="KW-0540">Nuclease</keyword>